<organism>
    <name type="scientific">Pleuronectes platessa</name>
    <name type="common">European plaice</name>
    <dbReference type="NCBI Taxonomy" id="8262"/>
    <lineage>
        <taxon>Eukaryota</taxon>
        <taxon>Metazoa</taxon>
        <taxon>Chordata</taxon>
        <taxon>Craniata</taxon>
        <taxon>Vertebrata</taxon>
        <taxon>Euteleostomi</taxon>
        <taxon>Actinopterygii</taxon>
        <taxon>Neopterygii</taxon>
        <taxon>Teleostei</taxon>
        <taxon>Neoteleostei</taxon>
        <taxon>Acanthomorphata</taxon>
        <taxon>Carangaria</taxon>
        <taxon>Pleuronectiformes</taxon>
        <taxon>Pleuronectoidei</taxon>
        <taxon>Pleuronectidae</taxon>
        <taxon>Pleuronectes</taxon>
    </lineage>
</organism>
<protein>
    <recommendedName>
        <fullName>Trypsin</fullName>
        <ecNumber>3.4.21.4</ecNumber>
    </recommendedName>
</protein>
<sequence>MRLLALLLMVGAAVAVPREDGRIIGGHECAAHSRPFMASLNYGYHFCGGVLINNQWVLSVAHCWYNPYAMQVMLGEHDLRKFEGTEQLMKTDTIIWHPNYDYQTLDLTSCSSSSTILWKVTHAVAPIPLPTSCPVAGTPCSVSGWGNTARDGDEVYLPTLLQCMDVPIVDEEQCMKSYPDMISPRMVCAGFMDGSRDACNGDSGSPLVCRGEVYGLVSWGQGCAQPNYPGVYVKLCEFLGWIERTLEAYP</sequence>
<comment type="catalytic activity">
    <reaction>
        <text>Preferential cleavage: Arg-|-Xaa, Lys-|-Xaa.</text>
        <dbReference type="EC" id="3.4.21.4"/>
    </reaction>
</comment>
<comment type="subcellular location">
    <subcellularLocation>
        <location>Secreted</location>
        <location>Extracellular space</location>
    </subcellularLocation>
</comment>
<comment type="similarity">
    <text evidence="3">Belongs to the peptidase S1 family.</text>
</comment>
<reference key="1">
    <citation type="submission" date="1990-11" db="EMBL/GenBank/DDBJ databases">
        <authorList>
            <person name="Leaver M.J."/>
            <person name="George S.G."/>
        </authorList>
    </citation>
    <scope>NUCLEOTIDE SEQUENCE [MRNA]</scope>
    <source>
        <tissue>Liver</tissue>
    </source>
</reference>
<keyword id="KW-1015">Disulfide bond</keyword>
<keyword id="KW-0378">Hydrolase</keyword>
<keyword id="KW-0645">Protease</keyword>
<keyword id="KW-0964">Secreted</keyword>
<keyword id="KW-0720">Serine protease</keyword>
<keyword id="KW-0732">Signal</keyword>
<keyword id="KW-0865">Zymogen</keyword>
<dbReference type="EC" id="3.4.21.4"/>
<dbReference type="EMBL" id="X56744">
    <property type="protein sequence ID" value="CAA40068.1"/>
    <property type="molecule type" value="mRNA"/>
</dbReference>
<dbReference type="PIR" id="S31384">
    <property type="entry name" value="S31384"/>
</dbReference>
<dbReference type="SMR" id="P35034"/>
<dbReference type="MEROPS" id="S01.124"/>
<dbReference type="GO" id="GO:0005615">
    <property type="term" value="C:extracellular space"/>
    <property type="evidence" value="ECO:0007669"/>
    <property type="project" value="TreeGrafter"/>
</dbReference>
<dbReference type="GO" id="GO:0004252">
    <property type="term" value="F:serine-type endopeptidase activity"/>
    <property type="evidence" value="ECO:0007669"/>
    <property type="project" value="UniProtKB-EC"/>
</dbReference>
<dbReference type="GO" id="GO:0006508">
    <property type="term" value="P:proteolysis"/>
    <property type="evidence" value="ECO:0007669"/>
    <property type="project" value="UniProtKB-KW"/>
</dbReference>
<dbReference type="CDD" id="cd00190">
    <property type="entry name" value="Tryp_SPc"/>
    <property type="match status" value="1"/>
</dbReference>
<dbReference type="FunFam" id="2.40.10.10:FF:000005">
    <property type="entry name" value="Serine protease 37"/>
    <property type="match status" value="1"/>
</dbReference>
<dbReference type="FunFam" id="2.40.10.10:FF:000254">
    <property type="entry name" value="Trypsin precursor"/>
    <property type="match status" value="1"/>
</dbReference>
<dbReference type="Gene3D" id="2.40.10.10">
    <property type="entry name" value="Trypsin-like serine proteases"/>
    <property type="match status" value="2"/>
</dbReference>
<dbReference type="InterPro" id="IPR009003">
    <property type="entry name" value="Peptidase_S1_PA"/>
</dbReference>
<dbReference type="InterPro" id="IPR043504">
    <property type="entry name" value="Peptidase_S1_PA_chymotrypsin"/>
</dbReference>
<dbReference type="InterPro" id="IPR001314">
    <property type="entry name" value="Peptidase_S1A"/>
</dbReference>
<dbReference type="InterPro" id="IPR050127">
    <property type="entry name" value="Serine_Proteases_S1"/>
</dbReference>
<dbReference type="InterPro" id="IPR001254">
    <property type="entry name" value="Trypsin_dom"/>
</dbReference>
<dbReference type="InterPro" id="IPR033116">
    <property type="entry name" value="TRYPSIN_SER"/>
</dbReference>
<dbReference type="PANTHER" id="PTHR24264:SF65">
    <property type="entry name" value="SRCR DOMAIN-CONTAINING PROTEIN"/>
    <property type="match status" value="1"/>
</dbReference>
<dbReference type="PANTHER" id="PTHR24264">
    <property type="entry name" value="TRYPSIN-RELATED"/>
    <property type="match status" value="1"/>
</dbReference>
<dbReference type="Pfam" id="PF00089">
    <property type="entry name" value="Trypsin"/>
    <property type="match status" value="1"/>
</dbReference>
<dbReference type="PRINTS" id="PR00722">
    <property type="entry name" value="CHYMOTRYPSIN"/>
</dbReference>
<dbReference type="SMART" id="SM00020">
    <property type="entry name" value="Tryp_SPc"/>
    <property type="match status" value="1"/>
</dbReference>
<dbReference type="SUPFAM" id="SSF50494">
    <property type="entry name" value="Trypsin-like serine proteases"/>
    <property type="match status" value="1"/>
</dbReference>
<dbReference type="PROSITE" id="PS50240">
    <property type="entry name" value="TRYPSIN_DOM"/>
    <property type="match status" value="1"/>
</dbReference>
<dbReference type="PROSITE" id="PS00135">
    <property type="entry name" value="TRYPSIN_SER"/>
    <property type="match status" value="1"/>
</dbReference>
<feature type="signal peptide" evidence="2">
    <location>
        <begin position="1"/>
        <end position="15"/>
    </location>
</feature>
<feature type="propeptide" id="PRO_0000028237" description="Activation peptide">
    <location>
        <begin position="16"/>
        <end position="22"/>
    </location>
</feature>
<feature type="chain" id="PRO_0000028238" description="Trypsin">
    <location>
        <begin position="23"/>
        <end position="250"/>
    </location>
</feature>
<feature type="domain" description="Peptidase S1" evidence="3">
    <location>
        <begin position="23"/>
        <end position="247"/>
    </location>
</feature>
<feature type="active site" description="Charge relay system" evidence="1">
    <location>
        <position position="62"/>
    </location>
</feature>
<feature type="active site" description="Charge relay system" evidence="1">
    <location>
        <position position="106"/>
    </location>
</feature>
<feature type="active site" description="Charge relay system" evidence="1">
    <location>
        <position position="203"/>
    </location>
</feature>
<feature type="site" description="Required for specificity" evidence="1">
    <location>
        <position position="197"/>
    </location>
</feature>
<feature type="disulfide bond" evidence="3">
    <location>
        <begin position="29"/>
        <end position="163"/>
    </location>
</feature>
<feature type="disulfide bond" evidence="3">
    <location>
        <begin position="47"/>
        <end position="63"/>
    </location>
</feature>
<feature type="disulfide bond" evidence="3">
    <location>
        <begin position="133"/>
        <end position="236"/>
    </location>
</feature>
<feature type="disulfide bond" evidence="3">
    <location>
        <begin position="140"/>
        <end position="209"/>
    </location>
</feature>
<feature type="disulfide bond" evidence="3">
    <location>
        <begin position="174"/>
        <end position="188"/>
    </location>
</feature>
<feature type="disulfide bond" evidence="3">
    <location>
        <begin position="199"/>
        <end position="223"/>
    </location>
</feature>
<evidence type="ECO:0000250" key="1"/>
<evidence type="ECO:0000255" key="2"/>
<evidence type="ECO:0000255" key="3">
    <source>
        <dbReference type="PROSITE-ProRule" id="PRU00274"/>
    </source>
</evidence>
<name>TRYP_PLEPL</name>
<proteinExistence type="evidence at transcript level"/>
<accession>P35034</accession>